<keyword id="KW-0145">Chemotaxis</keyword>
<keyword id="KW-0378">Hydrolase</keyword>
<keyword id="KW-1185">Reference proteome</keyword>
<sequence length="198" mass="21659">MSTAVQVDDVMRYRDSRFQTIAAKLLPTQYLVVDDDTALTTTLGSCVAACLRDPVLKIGGMNHFLLPEGQVGDGAPARYGSYAMELLINDMLKRGAHRKRIEAKVFGGANVLKGFTSNPVGTRNAEFVRQYLQAEHIPIIAEDLCGIHPRKVWFFPTTGRVVVQRLPHAHEAEVAAAESAVRARLSKAPVTGGVELFE</sequence>
<reference key="1">
    <citation type="journal article" date="2002" name="Nature">
        <title>Comparison of the genomes of two Xanthomonas pathogens with differing host specificities.</title>
        <authorList>
            <person name="da Silva A.C.R."/>
            <person name="Ferro J.A."/>
            <person name="Reinach F.C."/>
            <person name="Farah C.S."/>
            <person name="Furlan L.R."/>
            <person name="Quaggio R.B."/>
            <person name="Monteiro-Vitorello C.B."/>
            <person name="Van Sluys M.A."/>
            <person name="Almeida N.F. Jr."/>
            <person name="Alves L.M.C."/>
            <person name="do Amaral A.M."/>
            <person name="Bertolini M.C."/>
            <person name="Camargo L.E.A."/>
            <person name="Camarotte G."/>
            <person name="Cannavan F."/>
            <person name="Cardozo J."/>
            <person name="Chambergo F."/>
            <person name="Ciapina L.P."/>
            <person name="Cicarelli R.M.B."/>
            <person name="Coutinho L.L."/>
            <person name="Cursino-Santos J.R."/>
            <person name="El-Dorry H."/>
            <person name="Faria J.B."/>
            <person name="Ferreira A.J.S."/>
            <person name="Ferreira R.C.C."/>
            <person name="Ferro M.I.T."/>
            <person name="Formighieri E.F."/>
            <person name="Franco M.C."/>
            <person name="Greggio C.C."/>
            <person name="Gruber A."/>
            <person name="Katsuyama A.M."/>
            <person name="Kishi L.T."/>
            <person name="Leite R.P."/>
            <person name="Lemos E.G.M."/>
            <person name="Lemos M.V.F."/>
            <person name="Locali E.C."/>
            <person name="Machado M.A."/>
            <person name="Madeira A.M.B.N."/>
            <person name="Martinez-Rossi N.M."/>
            <person name="Martins E.C."/>
            <person name="Meidanis J."/>
            <person name="Menck C.F.M."/>
            <person name="Miyaki C.Y."/>
            <person name="Moon D.H."/>
            <person name="Moreira L.M."/>
            <person name="Novo M.T.M."/>
            <person name="Okura V.K."/>
            <person name="Oliveira M.C."/>
            <person name="Oliveira V.R."/>
            <person name="Pereira H.A."/>
            <person name="Rossi A."/>
            <person name="Sena J.A.D."/>
            <person name="Silva C."/>
            <person name="de Souza R.F."/>
            <person name="Spinola L.A.F."/>
            <person name="Takita M.A."/>
            <person name="Tamura R.E."/>
            <person name="Teixeira E.C."/>
            <person name="Tezza R.I.D."/>
            <person name="Trindade dos Santos M."/>
            <person name="Truffi D."/>
            <person name="Tsai S.M."/>
            <person name="White F.F."/>
            <person name="Setubal J.C."/>
            <person name="Kitajima J.P."/>
        </authorList>
    </citation>
    <scope>NUCLEOTIDE SEQUENCE [LARGE SCALE GENOMIC DNA]</scope>
    <source>
        <strain>ATCC 33913 / DSM 3586 / NCPPB 528 / LMG 568 / P 25</strain>
    </source>
</reference>
<dbReference type="EC" id="3.5.1.44" evidence="1"/>
<dbReference type="EMBL" id="AE008922">
    <property type="protein sequence ID" value="AAM41156.1"/>
    <property type="molecule type" value="Genomic_DNA"/>
</dbReference>
<dbReference type="RefSeq" id="NP_637232.1">
    <property type="nucleotide sequence ID" value="NC_003902.1"/>
</dbReference>
<dbReference type="RefSeq" id="WP_011037037.1">
    <property type="nucleotide sequence ID" value="NC_003902.1"/>
</dbReference>
<dbReference type="SMR" id="Q8P9J6"/>
<dbReference type="STRING" id="190485.XCC1867"/>
<dbReference type="EnsemblBacteria" id="AAM41156">
    <property type="protein sequence ID" value="AAM41156"/>
    <property type="gene ID" value="XCC1867"/>
</dbReference>
<dbReference type="GeneID" id="58013584"/>
<dbReference type="KEGG" id="xcc:XCC1867"/>
<dbReference type="PATRIC" id="fig|190485.4.peg.1992"/>
<dbReference type="eggNOG" id="COG1871">
    <property type="taxonomic scope" value="Bacteria"/>
</dbReference>
<dbReference type="HOGENOM" id="CLU_087854_0_0_6"/>
<dbReference type="OrthoDB" id="9807202at2"/>
<dbReference type="Proteomes" id="UP000001010">
    <property type="component" value="Chromosome"/>
</dbReference>
<dbReference type="GO" id="GO:0050568">
    <property type="term" value="F:protein-glutamine glutaminase activity"/>
    <property type="evidence" value="ECO:0007669"/>
    <property type="project" value="UniProtKB-UniRule"/>
</dbReference>
<dbReference type="GO" id="GO:0006935">
    <property type="term" value="P:chemotaxis"/>
    <property type="evidence" value="ECO:0007669"/>
    <property type="project" value="UniProtKB-UniRule"/>
</dbReference>
<dbReference type="CDD" id="cd16352">
    <property type="entry name" value="CheD"/>
    <property type="match status" value="1"/>
</dbReference>
<dbReference type="Gene3D" id="3.30.1330.200">
    <property type="match status" value="1"/>
</dbReference>
<dbReference type="HAMAP" id="MF_01440">
    <property type="entry name" value="CheD"/>
    <property type="match status" value="1"/>
</dbReference>
<dbReference type="InterPro" id="IPR038592">
    <property type="entry name" value="CheD-like_sf"/>
</dbReference>
<dbReference type="InterPro" id="IPR005659">
    <property type="entry name" value="Chemorcpt_Glu_NH3ase_CheD"/>
</dbReference>
<dbReference type="InterPro" id="IPR011324">
    <property type="entry name" value="Cytotoxic_necrot_fac-like_cat"/>
</dbReference>
<dbReference type="NCBIfam" id="NF010013">
    <property type="entry name" value="PRK13487.1"/>
    <property type="match status" value="1"/>
</dbReference>
<dbReference type="PANTHER" id="PTHR35147">
    <property type="entry name" value="CHEMORECEPTOR GLUTAMINE DEAMIDASE CHED-RELATED"/>
    <property type="match status" value="1"/>
</dbReference>
<dbReference type="PANTHER" id="PTHR35147:SF2">
    <property type="entry name" value="CHEMORECEPTOR GLUTAMINE DEAMIDASE CHED-RELATED"/>
    <property type="match status" value="1"/>
</dbReference>
<dbReference type="Pfam" id="PF03975">
    <property type="entry name" value="CheD"/>
    <property type="match status" value="1"/>
</dbReference>
<dbReference type="SUPFAM" id="SSF64438">
    <property type="entry name" value="CNF1/YfiH-like putative cysteine hydrolases"/>
    <property type="match status" value="1"/>
</dbReference>
<gene>
    <name evidence="1" type="primary">cheD</name>
    <name type="ordered locus">XCC1867</name>
</gene>
<comment type="function">
    <text evidence="1">Probably deamidates glutamine residues to glutamate on methyl-accepting chemotaxis receptors (MCPs), playing an important role in chemotaxis.</text>
</comment>
<comment type="catalytic activity">
    <reaction evidence="1">
        <text>L-glutaminyl-[protein] + H2O = L-glutamyl-[protein] + NH4(+)</text>
        <dbReference type="Rhea" id="RHEA:16441"/>
        <dbReference type="Rhea" id="RHEA-COMP:10207"/>
        <dbReference type="Rhea" id="RHEA-COMP:10208"/>
        <dbReference type="ChEBI" id="CHEBI:15377"/>
        <dbReference type="ChEBI" id="CHEBI:28938"/>
        <dbReference type="ChEBI" id="CHEBI:29973"/>
        <dbReference type="ChEBI" id="CHEBI:30011"/>
        <dbReference type="EC" id="3.5.1.44"/>
    </reaction>
</comment>
<comment type="similarity">
    <text evidence="1">Belongs to the CheD family.</text>
</comment>
<organism>
    <name type="scientific">Xanthomonas campestris pv. campestris (strain ATCC 33913 / DSM 3586 / NCPPB 528 / LMG 568 / P 25)</name>
    <dbReference type="NCBI Taxonomy" id="190485"/>
    <lineage>
        <taxon>Bacteria</taxon>
        <taxon>Pseudomonadati</taxon>
        <taxon>Pseudomonadota</taxon>
        <taxon>Gammaproteobacteria</taxon>
        <taxon>Lysobacterales</taxon>
        <taxon>Lysobacteraceae</taxon>
        <taxon>Xanthomonas</taxon>
    </lineage>
</organism>
<accession>Q8P9J6</accession>
<feature type="chain" id="PRO_0000251080" description="Probable chemoreceptor glutamine deamidase CheD">
    <location>
        <begin position="1"/>
        <end position="198"/>
    </location>
</feature>
<protein>
    <recommendedName>
        <fullName evidence="1">Probable chemoreceptor glutamine deamidase CheD</fullName>
        <ecNumber evidence="1">3.5.1.44</ecNumber>
    </recommendedName>
</protein>
<evidence type="ECO:0000255" key="1">
    <source>
        <dbReference type="HAMAP-Rule" id="MF_01440"/>
    </source>
</evidence>
<name>CHED_XANCP</name>
<proteinExistence type="inferred from homology"/>